<proteinExistence type="inferred from homology"/>
<reference key="1">
    <citation type="submission" date="2006-12" db="EMBL/GenBank/DDBJ databases">
        <authorList>
            <person name="Fouts D.E."/>
            <person name="Nelson K.E."/>
            <person name="Sebastian Y."/>
        </authorList>
    </citation>
    <scope>NUCLEOTIDE SEQUENCE [LARGE SCALE GENOMIC DNA]</scope>
    <source>
        <strain>81-176</strain>
    </source>
</reference>
<organism>
    <name type="scientific">Campylobacter jejuni subsp. jejuni serotype O:23/36 (strain 81-176)</name>
    <dbReference type="NCBI Taxonomy" id="354242"/>
    <lineage>
        <taxon>Bacteria</taxon>
        <taxon>Pseudomonadati</taxon>
        <taxon>Campylobacterota</taxon>
        <taxon>Epsilonproteobacteria</taxon>
        <taxon>Campylobacterales</taxon>
        <taxon>Campylobacteraceae</taxon>
        <taxon>Campylobacter</taxon>
    </lineage>
</organism>
<protein>
    <recommendedName>
        <fullName evidence="1">Putative pre-16S rRNA nuclease</fullName>
        <ecNumber evidence="1">3.1.-.-</ecNumber>
    </recommendedName>
</protein>
<name>YQGF_CAMJJ</name>
<sequence>MRALALDVGLKRIGVALCVDKKIALPLDAVLRKNRNQAANEIKNLLKIHEISLLIVGIPKGGSREEEMTRRIKHFVSLLEFDKEICFVDESGTSKEALGYGVANTRKKDGKLDSLSAFIMIKDYFAL</sequence>
<accession>A1VYZ5</accession>
<feature type="chain" id="PRO_1000061501" description="Putative pre-16S rRNA nuclease">
    <location>
        <begin position="1"/>
        <end position="127"/>
    </location>
</feature>
<comment type="function">
    <text evidence="1">Could be a nuclease involved in processing of the 5'-end of pre-16S rRNA.</text>
</comment>
<comment type="subcellular location">
    <subcellularLocation>
        <location evidence="1">Cytoplasm</location>
    </subcellularLocation>
</comment>
<comment type="similarity">
    <text evidence="1">Belongs to the YqgF nuclease family.</text>
</comment>
<gene>
    <name type="ordered locus">CJJ81176_0663</name>
</gene>
<keyword id="KW-0963">Cytoplasm</keyword>
<keyword id="KW-0378">Hydrolase</keyword>
<keyword id="KW-0540">Nuclease</keyword>
<keyword id="KW-0690">Ribosome biogenesis</keyword>
<dbReference type="EC" id="3.1.-.-" evidence="1"/>
<dbReference type="EMBL" id="CP000538">
    <property type="protein sequence ID" value="EAQ73438.1"/>
    <property type="molecule type" value="Genomic_DNA"/>
</dbReference>
<dbReference type="SMR" id="A1VYZ5"/>
<dbReference type="KEGG" id="cjj:CJJ81176_0663"/>
<dbReference type="eggNOG" id="COG0816">
    <property type="taxonomic scope" value="Bacteria"/>
</dbReference>
<dbReference type="HOGENOM" id="CLU_098240_2_2_7"/>
<dbReference type="Proteomes" id="UP000000646">
    <property type="component" value="Chromosome"/>
</dbReference>
<dbReference type="GO" id="GO:0005829">
    <property type="term" value="C:cytosol"/>
    <property type="evidence" value="ECO:0007669"/>
    <property type="project" value="TreeGrafter"/>
</dbReference>
<dbReference type="GO" id="GO:0004518">
    <property type="term" value="F:nuclease activity"/>
    <property type="evidence" value="ECO:0007669"/>
    <property type="project" value="UniProtKB-KW"/>
</dbReference>
<dbReference type="GO" id="GO:0000967">
    <property type="term" value="P:rRNA 5'-end processing"/>
    <property type="evidence" value="ECO:0007669"/>
    <property type="project" value="UniProtKB-UniRule"/>
</dbReference>
<dbReference type="CDD" id="cd16964">
    <property type="entry name" value="YqgF"/>
    <property type="match status" value="1"/>
</dbReference>
<dbReference type="Gene3D" id="3.30.420.140">
    <property type="entry name" value="YqgF/RNase H-like domain"/>
    <property type="match status" value="1"/>
</dbReference>
<dbReference type="HAMAP" id="MF_00651">
    <property type="entry name" value="Nuclease_YqgF"/>
    <property type="match status" value="1"/>
</dbReference>
<dbReference type="InterPro" id="IPR012337">
    <property type="entry name" value="RNaseH-like_sf"/>
</dbReference>
<dbReference type="InterPro" id="IPR005227">
    <property type="entry name" value="YqgF"/>
</dbReference>
<dbReference type="InterPro" id="IPR006641">
    <property type="entry name" value="YqgF/RNaseH-like_dom"/>
</dbReference>
<dbReference type="InterPro" id="IPR037027">
    <property type="entry name" value="YqgF/RNaseH-like_dom_sf"/>
</dbReference>
<dbReference type="NCBIfam" id="NF001026">
    <property type="entry name" value="PRK00109.2-2"/>
    <property type="match status" value="1"/>
</dbReference>
<dbReference type="NCBIfam" id="TIGR00250">
    <property type="entry name" value="RNAse_H_YqgF"/>
    <property type="match status" value="1"/>
</dbReference>
<dbReference type="PANTHER" id="PTHR33317">
    <property type="entry name" value="POLYNUCLEOTIDYL TRANSFERASE, RIBONUCLEASE H-LIKE SUPERFAMILY PROTEIN"/>
    <property type="match status" value="1"/>
</dbReference>
<dbReference type="PANTHER" id="PTHR33317:SF4">
    <property type="entry name" value="POLYNUCLEOTIDYL TRANSFERASE, RIBONUCLEASE H-LIKE SUPERFAMILY PROTEIN"/>
    <property type="match status" value="1"/>
</dbReference>
<dbReference type="Pfam" id="PF03652">
    <property type="entry name" value="RuvX"/>
    <property type="match status" value="1"/>
</dbReference>
<dbReference type="SMART" id="SM00732">
    <property type="entry name" value="YqgFc"/>
    <property type="match status" value="1"/>
</dbReference>
<dbReference type="SUPFAM" id="SSF53098">
    <property type="entry name" value="Ribonuclease H-like"/>
    <property type="match status" value="1"/>
</dbReference>
<evidence type="ECO:0000255" key="1">
    <source>
        <dbReference type="HAMAP-Rule" id="MF_00651"/>
    </source>
</evidence>